<proteinExistence type="inferred from homology"/>
<sequence>MDNQNIRIRLKAYDHRVLDNSTKEIVNTAKRTGARVRGPIPLPTHIERFTVNRSPHVDKKSREQFEIRTHRRLLDIVEPTPQTVDALMKLDLAAGVDVEIKL</sequence>
<reference key="1">
    <citation type="journal article" date="2005" name="Nat. Biotechnol.">
        <title>Complete genome sequence of the acetic acid bacterium Gluconobacter oxydans.</title>
        <authorList>
            <person name="Prust C."/>
            <person name="Hoffmeister M."/>
            <person name="Liesegang H."/>
            <person name="Wiezer A."/>
            <person name="Fricke W.F."/>
            <person name="Ehrenreich A."/>
            <person name="Gottschalk G."/>
            <person name="Deppenmeier U."/>
        </authorList>
    </citation>
    <scope>NUCLEOTIDE SEQUENCE [LARGE SCALE GENOMIC DNA]</scope>
    <source>
        <strain>621H</strain>
    </source>
</reference>
<keyword id="KW-1185">Reference proteome</keyword>
<keyword id="KW-0687">Ribonucleoprotein</keyword>
<keyword id="KW-0689">Ribosomal protein</keyword>
<comment type="function">
    <text evidence="1">Involved in the binding of tRNA to the ribosomes.</text>
</comment>
<comment type="subunit">
    <text evidence="1">Part of the 30S ribosomal subunit.</text>
</comment>
<comment type="similarity">
    <text evidence="1">Belongs to the universal ribosomal protein uS10 family.</text>
</comment>
<accession>Q5FTY2</accession>
<evidence type="ECO:0000255" key="1">
    <source>
        <dbReference type="HAMAP-Rule" id="MF_00508"/>
    </source>
</evidence>
<evidence type="ECO:0000305" key="2"/>
<protein>
    <recommendedName>
        <fullName evidence="1">Small ribosomal subunit protein uS10</fullName>
    </recommendedName>
    <alternativeName>
        <fullName evidence="2">30S ribosomal protein S10</fullName>
    </alternativeName>
</protein>
<gene>
    <name evidence="1" type="primary">rpsJ</name>
    <name type="ordered locus">GOX0381</name>
</gene>
<feature type="chain" id="PRO_0000237049" description="Small ribosomal subunit protein uS10">
    <location>
        <begin position="1"/>
        <end position="102"/>
    </location>
</feature>
<organism>
    <name type="scientific">Gluconobacter oxydans (strain 621H)</name>
    <name type="common">Gluconobacter suboxydans</name>
    <dbReference type="NCBI Taxonomy" id="290633"/>
    <lineage>
        <taxon>Bacteria</taxon>
        <taxon>Pseudomonadati</taxon>
        <taxon>Pseudomonadota</taxon>
        <taxon>Alphaproteobacteria</taxon>
        <taxon>Acetobacterales</taxon>
        <taxon>Acetobacteraceae</taxon>
        <taxon>Gluconobacter</taxon>
    </lineage>
</organism>
<name>RS10_GLUOX</name>
<dbReference type="EMBL" id="CP000009">
    <property type="protein sequence ID" value="AAW60164.1"/>
    <property type="molecule type" value="Genomic_DNA"/>
</dbReference>
<dbReference type="RefSeq" id="WP_007282720.1">
    <property type="nucleotide sequence ID" value="NZ_LT900338.1"/>
</dbReference>
<dbReference type="SMR" id="Q5FTY2"/>
<dbReference type="STRING" id="290633.GOX0381"/>
<dbReference type="GeneID" id="98313196"/>
<dbReference type="KEGG" id="gox:GOX0381"/>
<dbReference type="eggNOG" id="COG0051">
    <property type="taxonomic scope" value="Bacteria"/>
</dbReference>
<dbReference type="HOGENOM" id="CLU_122625_1_3_5"/>
<dbReference type="Proteomes" id="UP000006375">
    <property type="component" value="Chromosome"/>
</dbReference>
<dbReference type="GO" id="GO:1990904">
    <property type="term" value="C:ribonucleoprotein complex"/>
    <property type="evidence" value="ECO:0007669"/>
    <property type="project" value="UniProtKB-KW"/>
</dbReference>
<dbReference type="GO" id="GO:0005840">
    <property type="term" value="C:ribosome"/>
    <property type="evidence" value="ECO:0007669"/>
    <property type="project" value="UniProtKB-KW"/>
</dbReference>
<dbReference type="GO" id="GO:0003735">
    <property type="term" value="F:structural constituent of ribosome"/>
    <property type="evidence" value="ECO:0007669"/>
    <property type="project" value="InterPro"/>
</dbReference>
<dbReference type="GO" id="GO:0000049">
    <property type="term" value="F:tRNA binding"/>
    <property type="evidence" value="ECO:0007669"/>
    <property type="project" value="UniProtKB-UniRule"/>
</dbReference>
<dbReference type="GO" id="GO:0006412">
    <property type="term" value="P:translation"/>
    <property type="evidence" value="ECO:0007669"/>
    <property type="project" value="UniProtKB-UniRule"/>
</dbReference>
<dbReference type="FunFam" id="3.30.70.600:FF:000001">
    <property type="entry name" value="30S ribosomal protein S10"/>
    <property type="match status" value="1"/>
</dbReference>
<dbReference type="Gene3D" id="3.30.70.600">
    <property type="entry name" value="Ribosomal protein S10 domain"/>
    <property type="match status" value="1"/>
</dbReference>
<dbReference type="HAMAP" id="MF_00508">
    <property type="entry name" value="Ribosomal_uS10"/>
    <property type="match status" value="1"/>
</dbReference>
<dbReference type="InterPro" id="IPR001848">
    <property type="entry name" value="Ribosomal_uS10"/>
</dbReference>
<dbReference type="InterPro" id="IPR018268">
    <property type="entry name" value="Ribosomal_uS10_CS"/>
</dbReference>
<dbReference type="InterPro" id="IPR027486">
    <property type="entry name" value="Ribosomal_uS10_dom"/>
</dbReference>
<dbReference type="InterPro" id="IPR036838">
    <property type="entry name" value="Ribosomal_uS10_dom_sf"/>
</dbReference>
<dbReference type="NCBIfam" id="NF001861">
    <property type="entry name" value="PRK00596.1"/>
    <property type="match status" value="1"/>
</dbReference>
<dbReference type="NCBIfam" id="TIGR01049">
    <property type="entry name" value="rpsJ_bact"/>
    <property type="match status" value="1"/>
</dbReference>
<dbReference type="PANTHER" id="PTHR11700">
    <property type="entry name" value="30S RIBOSOMAL PROTEIN S10 FAMILY MEMBER"/>
    <property type="match status" value="1"/>
</dbReference>
<dbReference type="Pfam" id="PF00338">
    <property type="entry name" value="Ribosomal_S10"/>
    <property type="match status" value="1"/>
</dbReference>
<dbReference type="PRINTS" id="PR00971">
    <property type="entry name" value="RIBOSOMALS10"/>
</dbReference>
<dbReference type="SMART" id="SM01403">
    <property type="entry name" value="Ribosomal_S10"/>
    <property type="match status" value="1"/>
</dbReference>
<dbReference type="SUPFAM" id="SSF54999">
    <property type="entry name" value="Ribosomal protein S10"/>
    <property type="match status" value="1"/>
</dbReference>
<dbReference type="PROSITE" id="PS00361">
    <property type="entry name" value="RIBOSOMAL_S10"/>
    <property type="match status" value="1"/>
</dbReference>